<accession>P42129</accession>
<accession>Q71V21</accession>
<evidence type="ECO:0000256" key="1">
    <source>
        <dbReference type="SAM" id="MobiDB-lite"/>
    </source>
</evidence>
<evidence type="ECO:0000305" key="2"/>
<organism>
    <name type="scientific">Antechinus stuartii</name>
    <name type="common">Brown marsupial mouse</name>
    <dbReference type="NCBI Taxonomy" id="9283"/>
    <lineage>
        <taxon>Eukaryota</taxon>
        <taxon>Metazoa</taxon>
        <taxon>Chordata</taxon>
        <taxon>Craniata</taxon>
        <taxon>Vertebrata</taxon>
        <taxon>Euteleostomi</taxon>
        <taxon>Mammalia</taxon>
        <taxon>Metatheria</taxon>
        <taxon>Dasyuromorphia</taxon>
        <taxon>Dasyuridae</taxon>
        <taxon>Antechinus</taxon>
    </lineage>
</organism>
<reference key="1">
    <citation type="journal article" date="1995" name="Proc. R. Soc. B">
        <title>Molecular phylogeny and evolution of marsupial protamine P1 genes.</title>
        <authorList>
            <person name="Retief J.D."/>
            <person name="Krajewski C."/>
            <person name="Westerman M."/>
            <person name="Winkfein R.J."/>
            <person name="Dixon G.H."/>
        </authorList>
    </citation>
    <scope>NUCLEOTIDE SEQUENCE [GENOMIC DNA]</scope>
    <source>
        <tissue>Sperm</tissue>
    </source>
</reference>
<reference key="2">
    <citation type="journal article" date="1998" name="J. Mammal.">
        <title>Phylogeny of the dasyurid marsupial genus Antechinus based on cytochrome-b, 12S-rRNA, and protamine-P1 genes.</title>
        <authorList>
            <person name="Armstrong L.A."/>
            <person name="Krajewski C."/>
            <person name="Westerman M."/>
        </authorList>
    </citation>
    <scope>NUCLEOTIDE SEQUENCE [GENOMIC DNA]</scope>
</reference>
<keyword id="KW-0158">Chromosome</keyword>
<keyword id="KW-0217">Developmental protein</keyword>
<keyword id="KW-0221">Differentiation</keyword>
<keyword id="KW-0226">DNA condensation</keyword>
<keyword id="KW-0238">DNA-binding</keyword>
<keyword id="KW-0544">Nucleosome core</keyword>
<keyword id="KW-0539">Nucleus</keyword>
<keyword id="KW-0744">Spermatogenesis</keyword>
<comment type="function">
    <text>Protamines substitute for histones in the chromatin of sperm during the haploid phase of spermatogenesis. They compact sperm DNA into a highly condensed, stable and inactive complex.</text>
</comment>
<comment type="subcellular location">
    <subcellularLocation>
        <location>Nucleus</location>
    </subcellularLocation>
    <subcellularLocation>
        <location>Chromosome</location>
    </subcellularLocation>
</comment>
<comment type="tissue specificity">
    <text>Testis.</text>
</comment>
<comment type="similarity">
    <text evidence="2">Belongs to the protamine P1 family.</text>
</comment>
<dbReference type="EMBL" id="L35335">
    <property type="protein sequence ID" value="AAB95428.1"/>
    <property type="molecule type" value="Genomic_DNA"/>
</dbReference>
<dbReference type="EMBL" id="AF038292">
    <property type="protein sequence ID" value="AAC15619.1"/>
    <property type="molecule type" value="Genomic_DNA"/>
</dbReference>
<dbReference type="GO" id="GO:0000786">
    <property type="term" value="C:nucleosome"/>
    <property type="evidence" value="ECO:0007669"/>
    <property type="project" value="UniProtKB-KW"/>
</dbReference>
<dbReference type="GO" id="GO:0005634">
    <property type="term" value="C:nucleus"/>
    <property type="evidence" value="ECO:0007669"/>
    <property type="project" value="UniProtKB-SubCell"/>
</dbReference>
<dbReference type="GO" id="GO:0003677">
    <property type="term" value="F:DNA binding"/>
    <property type="evidence" value="ECO:0007669"/>
    <property type="project" value="UniProtKB-KW"/>
</dbReference>
<dbReference type="GO" id="GO:0030261">
    <property type="term" value="P:chromosome condensation"/>
    <property type="evidence" value="ECO:0007669"/>
    <property type="project" value="UniProtKB-KW"/>
</dbReference>
<dbReference type="GO" id="GO:0035092">
    <property type="term" value="P:sperm DNA condensation"/>
    <property type="evidence" value="ECO:0007669"/>
    <property type="project" value="InterPro"/>
</dbReference>
<dbReference type="InterPro" id="IPR000221">
    <property type="entry name" value="Protamine_P1"/>
</dbReference>
<dbReference type="PROSITE" id="PS00048">
    <property type="entry name" value="PROTAMINE_P1"/>
    <property type="match status" value="1"/>
</dbReference>
<feature type="chain" id="PRO_0000191448" description="Sperm protamine P1">
    <location>
        <begin position="1"/>
        <end position="63"/>
    </location>
</feature>
<feature type="region of interest" description="Disordered" evidence="1">
    <location>
        <begin position="1"/>
        <end position="63"/>
    </location>
</feature>
<feature type="sequence conflict" description="In Ref. 1; AAB95428." evidence="2" ref="1">
    <original>R</original>
    <variation>RR</variation>
    <location>
        <position position="23"/>
    </location>
</feature>
<protein>
    <recommendedName>
        <fullName>Sperm protamine P1</fullName>
    </recommendedName>
</protein>
<gene>
    <name type="primary">PRM1</name>
</gene>
<proteinExistence type="evidence at transcript level"/>
<name>HSP1_ANTST</name>
<sequence length="63" mass="8697">MARYRRHSRSRSRSRYRRRRRRRSRHHNRRRTYRRSRRHSRRRRGRRRGYSRRRYSRRGRRRY</sequence>